<comment type="function">
    <text evidence="1">Involved in protein export. Acts as a chaperone by maintaining the newly synthesized protein in an open conformation. Functions as a peptidyl-prolyl cis-trans isomerase.</text>
</comment>
<comment type="catalytic activity">
    <reaction evidence="1">
        <text>[protein]-peptidylproline (omega=180) = [protein]-peptidylproline (omega=0)</text>
        <dbReference type="Rhea" id="RHEA:16237"/>
        <dbReference type="Rhea" id="RHEA-COMP:10747"/>
        <dbReference type="Rhea" id="RHEA-COMP:10748"/>
        <dbReference type="ChEBI" id="CHEBI:83833"/>
        <dbReference type="ChEBI" id="CHEBI:83834"/>
        <dbReference type="EC" id="5.2.1.8"/>
    </reaction>
</comment>
<comment type="subcellular location">
    <subcellularLocation>
        <location>Cytoplasm</location>
    </subcellularLocation>
    <text evidence="1">About half TF is bound to the ribosome near the polypeptide exit tunnel while the other half is free in the cytoplasm.</text>
</comment>
<comment type="domain">
    <text evidence="1">Consists of 3 domains; the N-terminus binds the ribosome, the middle domain has PPIase activity, while the C-terminus has intrinsic chaperone activity on its own.</text>
</comment>
<comment type="similarity">
    <text evidence="1">Belongs to the FKBP-type PPIase family. Tig subfamily.</text>
</comment>
<name>TIG_MYCTA</name>
<evidence type="ECO:0000255" key="1">
    <source>
        <dbReference type="HAMAP-Rule" id="MF_00303"/>
    </source>
</evidence>
<evidence type="ECO:0000256" key="2">
    <source>
        <dbReference type="SAM" id="MobiDB-lite"/>
    </source>
</evidence>
<protein>
    <recommendedName>
        <fullName evidence="1">Trigger factor</fullName>
        <shortName evidence="1">TF</shortName>
        <ecNumber evidence="1">5.2.1.8</ecNumber>
    </recommendedName>
    <alternativeName>
        <fullName evidence="1">PPIase</fullName>
    </alternativeName>
</protein>
<organism>
    <name type="scientific">Mycobacterium tuberculosis (strain ATCC 25177 / H37Ra)</name>
    <dbReference type="NCBI Taxonomy" id="419947"/>
    <lineage>
        <taxon>Bacteria</taxon>
        <taxon>Bacillati</taxon>
        <taxon>Actinomycetota</taxon>
        <taxon>Actinomycetes</taxon>
        <taxon>Mycobacteriales</taxon>
        <taxon>Mycobacteriaceae</taxon>
        <taxon>Mycobacterium</taxon>
        <taxon>Mycobacterium tuberculosis complex</taxon>
    </lineage>
</organism>
<accession>A5U5F8</accession>
<dbReference type="EC" id="5.2.1.8" evidence="1"/>
<dbReference type="EMBL" id="CP000611">
    <property type="protein sequence ID" value="ABQ74258.1"/>
    <property type="molecule type" value="Genomic_DNA"/>
</dbReference>
<dbReference type="RefSeq" id="WP_003899331.1">
    <property type="nucleotide sequence ID" value="NZ_CP016972.1"/>
</dbReference>
<dbReference type="SMR" id="A5U5F8"/>
<dbReference type="KEGG" id="mra:MRA_2488"/>
<dbReference type="eggNOG" id="COG0544">
    <property type="taxonomic scope" value="Bacteria"/>
</dbReference>
<dbReference type="HOGENOM" id="CLU_033058_3_0_11"/>
<dbReference type="Proteomes" id="UP000001988">
    <property type="component" value="Chromosome"/>
</dbReference>
<dbReference type="GO" id="GO:0005737">
    <property type="term" value="C:cytoplasm"/>
    <property type="evidence" value="ECO:0007669"/>
    <property type="project" value="UniProtKB-SubCell"/>
</dbReference>
<dbReference type="GO" id="GO:0003755">
    <property type="term" value="F:peptidyl-prolyl cis-trans isomerase activity"/>
    <property type="evidence" value="ECO:0007669"/>
    <property type="project" value="UniProtKB-UniRule"/>
</dbReference>
<dbReference type="GO" id="GO:0044183">
    <property type="term" value="F:protein folding chaperone"/>
    <property type="evidence" value="ECO:0007669"/>
    <property type="project" value="TreeGrafter"/>
</dbReference>
<dbReference type="GO" id="GO:0043022">
    <property type="term" value="F:ribosome binding"/>
    <property type="evidence" value="ECO:0007669"/>
    <property type="project" value="TreeGrafter"/>
</dbReference>
<dbReference type="GO" id="GO:0051083">
    <property type="term" value="P:'de novo' cotranslational protein folding"/>
    <property type="evidence" value="ECO:0007669"/>
    <property type="project" value="TreeGrafter"/>
</dbReference>
<dbReference type="GO" id="GO:0051301">
    <property type="term" value="P:cell division"/>
    <property type="evidence" value="ECO:0007669"/>
    <property type="project" value="UniProtKB-KW"/>
</dbReference>
<dbReference type="GO" id="GO:0061077">
    <property type="term" value="P:chaperone-mediated protein folding"/>
    <property type="evidence" value="ECO:0007669"/>
    <property type="project" value="TreeGrafter"/>
</dbReference>
<dbReference type="GO" id="GO:0015031">
    <property type="term" value="P:protein transport"/>
    <property type="evidence" value="ECO:0007669"/>
    <property type="project" value="UniProtKB-UniRule"/>
</dbReference>
<dbReference type="GO" id="GO:0043335">
    <property type="term" value="P:protein unfolding"/>
    <property type="evidence" value="ECO:0007669"/>
    <property type="project" value="TreeGrafter"/>
</dbReference>
<dbReference type="FunFam" id="3.10.50.40:FF:000019">
    <property type="entry name" value="Trigger factor"/>
    <property type="match status" value="1"/>
</dbReference>
<dbReference type="FunFam" id="3.30.70.1050:FF:000003">
    <property type="entry name" value="Trigger factor"/>
    <property type="match status" value="1"/>
</dbReference>
<dbReference type="Gene3D" id="3.10.50.40">
    <property type="match status" value="1"/>
</dbReference>
<dbReference type="Gene3D" id="3.30.70.1050">
    <property type="entry name" value="Trigger factor ribosome-binding domain"/>
    <property type="match status" value="1"/>
</dbReference>
<dbReference type="Gene3D" id="1.10.3120.10">
    <property type="entry name" value="Trigger factor, C-terminal domain"/>
    <property type="match status" value="1"/>
</dbReference>
<dbReference type="HAMAP" id="MF_00303">
    <property type="entry name" value="Trigger_factor_Tig"/>
    <property type="match status" value="1"/>
</dbReference>
<dbReference type="InterPro" id="IPR046357">
    <property type="entry name" value="PPIase_dom_sf"/>
</dbReference>
<dbReference type="InterPro" id="IPR001179">
    <property type="entry name" value="PPIase_FKBP_dom"/>
</dbReference>
<dbReference type="InterPro" id="IPR005215">
    <property type="entry name" value="Trig_fac"/>
</dbReference>
<dbReference type="InterPro" id="IPR008880">
    <property type="entry name" value="Trigger_fac_C"/>
</dbReference>
<dbReference type="InterPro" id="IPR037041">
    <property type="entry name" value="Trigger_fac_C_sf"/>
</dbReference>
<dbReference type="InterPro" id="IPR008881">
    <property type="entry name" value="Trigger_fac_ribosome-bd_bac"/>
</dbReference>
<dbReference type="InterPro" id="IPR036611">
    <property type="entry name" value="Trigger_fac_ribosome-bd_sf"/>
</dbReference>
<dbReference type="InterPro" id="IPR027304">
    <property type="entry name" value="Trigger_fact/SurA_dom_sf"/>
</dbReference>
<dbReference type="NCBIfam" id="TIGR00115">
    <property type="entry name" value="tig"/>
    <property type="match status" value="1"/>
</dbReference>
<dbReference type="PANTHER" id="PTHR30560">
    <property type="entry name" value="TRIGGER FACTOR CHAPERONE AND PEPTIDYL-PROLYL CIS/TRANS ISOMERASE"/>
    <property type="match status" value="1"/>
</dbReference>
<dbReference type="PANTHER" id="PTHR30560:SF3">
    <property type="entry name" value="TRIGGER FACTOR-LIKE PROTEIN TIG, CHLOROPLASTIC"/>
    <property type="match status" value="1"/>
</dbReference>
<dbReference type="Pfam" id="PF00254">
    <property type="entry name" value="FKBP_C"/>
    <property type="match status" value="1"/>
</dbReference>
<dbReference type="Pfam" id="PF05698">
    <property type="entry name" value="Trigger_C"/>
    <property type="match status" value="1"/>
</dbReference>
<dbReference type="Pfam" id="PF05697">
    <property type="entry name" value="Trigger_N"/>
    <property type="match status" value="1"/>
</dbReference>
<dbReference type="PIRSF" id="PIRSF003095">
    <property type="entry name" value="Trigger_factor"/>
    <property type="match status" value="1"/>
</dbReference>
<dbReference type="SUPFAM" id="SSF54534">
    <property type="entry name" value="FKBP-like"/>
    <property type="match status" value="1"/>
</dbReference>
<dbReference type="SUPFAM" id="SSF109998">
    <property type="entry name" value="Triger factor/SurA peptide-binding domain-like"/>
    <property type="match status" value="1"/>
</dbReference>
<dbReference type="SUPFAM" id="SSF102735">
    <property type="entry name" value="Trigger factor ribosome-binding domain"/>
    <property type="match status" value="1"/>
</dbReference>
<feature type="chain" id="PRO_1000022715" description="Trigger factor">
    <location>
        <begin position="1"/>
        <end position="466"/>
    </location>
</feature>
<feature type="domain" description="PPIase FKBP-type" evidence="1">
    <location>
        <begin position="162"/>
        <end position="243"/>
    </location>
</feature>
<feature type="region of interest" description="Disordered" evidence="2">
    <location>
        <begin position="428"/>
        <end position="466"/>
    </location>
</feature>
<feature type="compositionally biased region" description="Low complexity" evidence="2">
    <location>
        <begin position="457"/>
        <end position="466"/>
    </location>
</feature>
<keyword id="KW-0131">Cell cycle</keyword>
<keyword id="KW-0132">Cell division</keyword>
<keyword id="KW-0143">Chaperone</keyword>
<keyword id="KW-0963">Cytoplasm</keyword>
<keyword id="KW-0413">Isomerase</keyword>
<keyword id="KW-1185">Reference proteome</keyword>
<keyword id="KW-0697">Rotamase</keyword>
<proteinExistence type="inferred from homology"/>
<reference key="1">
    <citation type="journal article" date="2008" name="PLoS ONE">
        <title>Genetic basis of virulence attenuation revealed by comparative genomic analysis of Mycobacterium tuberculosis strain H37Ra versus H37Rv.</title>
        <authorList>
            <person name="Zheng H."/>
            <person name="Lu L."/>
            <person name="Wang B."/>
            <person name="Pu S."/>
            <person name="Zhang X."/>
            <person name="Zhu G."/>
            <person name="Shi W."/>
            <person name="Zhang L."/>
            <person name="Wang H."/>
            <person name="Wang S."/>
            <person name="Zhao G."/>
            <person name="Zhang Y."/>
        </authorList>
    </citation>
    <scope>NUCLEOTIDE SEQUENCE [LARGE SCALE GENOMIC DNA]</scope>
    <source>
        <strain>ATCC 25177 / H37Ra</strain>
    </source>
</reference>
<sequence>MKSTVEQLSPTRVRINVEVPFAELEPDFQRAYKELAKQVRLPGFRPGKAPAKLLEARIGREAMLDQIVNDALPSRYGQAVAESDVQPLGRPNIEVTKKEYGQDLQFTAEVDIRPKISPPDLSALTVSVDPIEIGEDDVDAELQSLRTRFGTLTAVDRPVAVGDVVSIDLSATVDGEDIPNAAAEGLSHEVGSGRLIAGLDDAVVGLSADESRVFTAKLAAGEHAGQEAQVTVTVRSVKERELPEPDDEFAQLASEFDSIDELRASLSDQVRQAKRAQQAEQIRNATIDALLEQVDVPLPESYVQAQFDSVLHSALSGLNHDEARFNELLVEQGSSRAAFDAEARTASEKDVKRQLLLDALADELQVQVGQDDLTERLVTTSRQYGIEPQQLFGYLQERNQLPTMFADVRRELAIRAAVEAATVTDSDGNTIDTSEFFGKRVSAGEAEEAEPADEGAARAASDEATT</sequence>
<gene>
    <name evidence="1" type="primary">tig</name>
    <name type="ordered locus">MRA_2488</name>
</gene>